<dbReference type="EC" id="2.4.2.9" evidence="1"/>
<dbReference type="EMBL" id="CP000521">
    <property type="protein sequence ID" value="ABO11205.2"/>
    <property type="molecule type" value="Genomic_DNA"/>
</dbReference>
<dbReference type="RefSeq" id="WP_001007344.1">
    <property type="nucleotide sequence ID" value="NZ_CACVBA010000001.1"/>
</dbReference>
<dbReference type="SMR" id="A3M2R1"/>
<dbReference type="KEGG" id="acb:A1S_0765"/>
<dbReference type="HOGENOM" id="CLU_067096_2_2_6"/>
<dbReference type="UniPathway" id="UPA00574">
    <property type="reaction ID" value="UER00636"/>
</dbReference>
<dbReference type="GO" id="GO:0005525">
    <property type="term" value="F:GTP binding"/>
    <property type="evidence" value="ECO:0007669"/>
    <property type="project" value="UniProtKB-KW"/>
</dbReference>
<dbReference type="GO" id="GO:0000287">
    <property type="term" value="F:magnesium ion binding"/>
    <property type="evidence" value="ECO:0007669"/>
    <property type="project" value="UniProtKB-UniRule"/>
</dbReference>
<dbReference type="GO" id="GO:0004845">
    <property type="term" value="F:uracil phosphoribosyltransferase activity"/>
    <property type="evidence" value="ECO:0007669"/>
    <property type="project" value="UniProtKB-UniRule"/>
</dbReference>
<dbReference type="GO" id="GO:0044206">
    <property type="term" value="P:UMP salvage"/>
    <property type="evidence" value="ECO:0007669"/>
    <property type="project" value="UniProtKB-UniRule"/>
</dbReference>
<dbReference type="GO" id="GO:0006223">
    <property type="term" value="P:uracil salvage"/>
    <property type="evidence" value="ECO:0007669"/>
    <property type="project" value="InterPro"/>
</dbReference>
<dbReference type="CDD" id="cd06223">
    <property type="entry name" value="PRTases_typeI"/>
    <property type="match status" value="1"/>
</dbReference>
<dbReference type="FunFam" id="3.40.50.2020:FF:000003">
    <property type="entry name" value="Uracil phosphoribosyltransferase"/>
    <property type="match status" value="1"/>
</dbReference>
<dbReference type="Gene3D" id="3.40.50.2020">
    <property type="match status" value="1"/>
</dbReference>
<dbReference type="HAMAP" id="MF_01218_B">
    <property type="entry name" value="Upp_B"/>
    <property type="match status" value="1"/>
</dbReference>
<dbReference type="InterPro" id="IPR000836">
    <property type="entry name" value="PRibTrfase_dom"/>
</dbReference>
<dbReference type="InterPro" id="IPR029057">
    <property type="entry name" value="PRTase-like"/>
</dbReference>
<dbReference type="InterPro" id="IPR034332">
    <property type="entry name" value="Upp_B"/>
</dbReference>
<dbReference type="InterPro" id="IPR050054">
    <property type="entry name" value="UPRTase/APRTase"/>
</dbReference>
<dbReference type="InterPro" id="IPR005765">
    <property type="entry name" value="Ura_phspho_trans"/>
</dbReference>
<dbReference type="NCBIfam" id="NF001097">
    <property type="entry name" value="PRK00129.1"/>
    <property type="match status" value="1"/>
</dbReference>
<dbReference type="NCBIfam" id="TIGR01091">
    <property type="entry name" value="upp"/>
    <property type="match status" value="1"/>
</dbReference>
<dbReference type="PANTHER" id="PTHR32315">
    <property type="entry name" value="ADENINE PHOSPHORIBOSYLTRANSFERASE"/>
    <property type="match status" value="1"/>
</dbReference>
<dbReference type="PANTHER" id="PTHR32315:SF4">
    <property type="entry name" value="URACIL PHOSPHORIBOSYLTRANSFERASE, CHLOROPLASTIC"/>
    <property type="match status" value="1"/>
</dbReference>
<dbReference type="Pfam" id="PF14681">
    <property type="entry name" value="UPRTase"/>
    <property type="match status" value="1"/>
</dbReference>
<dbReference type="SUPFAM" id="SSF53271">
    <property type="entry name" value="PRTase-like"/>
    <property type="match status" value="1"/>
</dbReference>
<sequence length="211" mass="22863">MAIQEIRHPLIRHKLGLLRRADISTKNFRELAQEVTMLLTYEATKDLPVVDCEIEGWAGNVTTQRIAGKKITIVPILRAGIGMLDGVLNLIPSAKVSVLGLERDEATLEVRTYYKKLVPDVANRIAMIIDPMLATGNSLVAAIDVLKASGCKDIRVMVLVAAPEGIAKVETAHPDIQLYTASIDNGLNEHGYIVPGLGDAGDKIFGSVQKD</sequence>
<accession>A3M2R1</accession>
<keyword id="KW-0021">Allosteric enzyme</keyword>
<keyword id="KW-0328">Glycosyltransferase</keyword>
<keyword id="KW-0342">GTP-binding</keyword>
<keyword id="KW-0460">Magnesium</keyword>
<keyword id="KW-0547">Nucleotide-binding</keyword>
<keyword id="KW-0808">Transferase</keyword>
<gene>
    <name evidence="1" type="primary">upp</name>
    <name type="ordered locus">A1S_0765</name>
</gene>
<comment type="function">
    <text evidence="1">Catalyzes the conversion of uracil and 5-phospho-alpha-D-ribose 1-diphosphate (PRPP) to UMP and diphosphate.</text>
</comment>
<comment type="catalytic activity">
    <reaction evidence="1">
        <text>UMP + diphosphate = 5-phospho-alpha-D-ribose 1-diphosphate + uracil</text>
        <dbReference type="Rhea" id="RHEA:13017"/>
        <dbReference type="ChEBI" id="CHEBI:17568"/>
        <dbReference type="ChEBI" id="CHEBI:33019"/>
        <dbReference type="ChEBI" id="CHEBI:57865"/>
        <dbReference type="ChEBI" id="CHEBI:58017"/>
        <dbReference type="EC" id="2.4.2.9"/>
    </reaction>
</comment>
<comment type="cofactor">
    <cofactor evidence="1">
        <name>Mg(2+)</name>
        <dbReference type="ChEBI" id="CHEBI:18420"/>
    </cofactor>
    <text evidence="1">Binds 1 Mg(2+) ion per subunit. The magnesium is bound as Mg-PRPP.</text>
</comment>
<comment type="activity regulation">
    <text evidence="1">Allosterically activated by GTP.</text>
</comment>
<comment type="pathway">
    <text evidence="1">Pyrimidine metabolism; UMP biosynthesis via salvage pathway; UMP from uracil: step 1/1.</text>
</comment>
<comment type="similarity">
    <text evidence="1">Belongs to the UPRTase family.</text>
</comment>
<reference key="1">
    <citation type="journal article" date="2007" name="Genes Dev.">
        <title>New insights into Acinetobacter baumannii pathogenesis revealed by high-density pyrosequencing and transposon mutagenesis.</title>
        <authorList>
            <person name="Smith M.G."/>
            <person name="Gianoulis T.A."/>
            <person name="Pukatzki S."/>
            <person name="Mekalanos J.J."/>
            <person name="Ornston L.N."/>
            <person name="Gerstein M."/>
            <person name="Snyder M."/>
        </authorList>
    </citation>
    <scope>NUCLEOTIDE SEQUENCE [LARGE SCALE GENOMIC DNA]</scope>
    <source>
        <strain>ATCC 17978 / DSM 105126 / CIP 53.77 / LMG 1025 / NCDC KC755 / 5377</strain>
    </source>
</reference>
<evidence type="ECO:0000255" key="1">
    <source>
        <dbReference type="HAMAP-Rule" id="MF_01218"/>
    </source>
</evidence>
<protein>
    <recommendedName>
        <fullName evidence="1">Uracil phosphoribosyltransferase</fullName>
        <ecNumber evidence="1">2.4.2.9</ecNumber>
    </recommendedName>
    <alternativeName>
        <fullName evidence="1">UMP pyrophosphorylase</fullName>
    </alternativeName>
    <alternativeName>
        <fullName evidence="1">UPRTase</fullName>
    </alternativeName>
</protein>
<proteinExistence type="inferred from homology"/>
<feature type="chain" id="PRO_1000139086" description="Uracil phosphoribosyltransferase">
    <location>
        <begin position="1"/>
        <end position="211"/>
    </location>
</feature>
<feature type="binding site" evidence="1">
    <location>
        <position position="78"/>
    </location>
    <ligand>
        <name>5-phospho-alpha-D-ribose 1-diphosphate</name>
        <dbReference type="ChEBI" id="CHEBI:58017"/>
    </ligand>
</feature>
<feature type="binding site" evidence="1">
    <location>
        <position position="103"/>
    </location>
    <ligand>
        <name>5-phospho-alpha-D-ribose 1-diphosphate</name>
        <dbReference type="ChEBI" id="CHEBI:58017"/>
    </ligand>
</feature>
<feature type="binding site" evidence="1">
    <location>
        <begin position="130"/>
        <end position="138"/>
    </location>
    <ligand>
        <name>5-phospho-alpha-D-ribose 1-diphosphate</name>
        <dbReference type="ChEBI" id="CHEBI:58017"/>
    </ligand>
</feature>
<feature type="binding site" evidence="1">
    <location>
        <position position="193"/>
    </location>
    <ligand>
        <name>uracil</name>
        <dbReference type="ChEBI" id="CHEBI:17568"/>
    </ligand>
</feature>
<feature type="binding site" evidence="1">
    <location>
        <begin position="198"/>
        <end position="200"/>
    </location>
    <ligand>
        <name>uracil</name>
        <dbReference type="ChEBI" id="CHEBI:17568"/>
    </ligand>
</feature>
<feature type="binding site" evidence="1">
    <location>
        <position position="199"/>
    </location>
    <ligand>
        <name>5-phospho-alpha-D-ribose 1-diphosphate</name>
        <dbReference type="ChEBI" id="CHEBI:58017"/>
    </ligand>
</feature>
<name>UPP_ACIBT</name>
<organism>
    <name type="scientific">Acinetobacter baumannii (strain ATCC 17978 / DSM 105126 / CIP 53.77 / LMG 1025 / NCDC KC755 / 5377)</name>
    <dbReference type="NCBI Taxonomy" id="400667"/>
    <lineage>
        <taxon>Bacteria</taxon>
        <taxon>Pseudomonadati</taxon>
        <taxon>Pseudomonadota</taxon>
        <taxon>Gammaproteobacteria</taxon>
        <taxon>Moraxellales</taxon>
        <taxon>Moraxellaceae</taxon>
        <taxon>Acinetobacter</taxon>
        <taxon>Acinetobacter calcoaceticus/baumannii complex</taxon>
    </lineage>
</organism>